<evidence type="ECO:0000250" key="1">
    <source>
        <dbReference type="UniProtKB" id="P0A955"/>
    </source>
</evidence>
<evidence type="ECO:0000305" key="2"/>
<evidence type="ECO:0000312" key="3">
    <source>
        <dbReference type="EMBL" id="AAN43418.1"/>
    </source>
</evidence>
<evidence type="ECO:0000312" key="4">
    <source>
        <dbReference type="EMBL" id="AAP17241.1"/>
    </source>
</evidence>
<dbReference type="EC" id="4.1.3.42" evidence="1"/>
<dbReference type="EC" id="4.1.2.14" evidence="1"/>
<dbReference type="EMBL" id="AE005674">
    <property type="protein sequence ID" value="AAN43418.1"/>
    <property type="molecule type" value="Genomic_DNA"/>
</dbReference>
<dbReference type="EMBL" id="AE014073">
    <property type="protein sequence ID" value="AAP17241.1"/>
    <property type="molecule type" value="Genomic_DNA"/>
</dbReference>
<dbReference type="SMR" id="P0A958"/>
<dbReference type="STRING" id="198214.SF1860"/>
<dbReference type="PaxDb" id="198214-SF1860"/>
<dbReference type="KEGG" id="sfl:SF1860"/>
<dbReference type="KEGG" id="sfx:S1926"/>
<dbReference type="PATRIC" id="fig|198214.7.peg.2216"/>
<dbReference type="HOGENOM" id="CLU_077795_1_1_6"/>
<dbReference type="UniPathway" id="UPA00227"/>
<dbReference type="UniPathway" id="UPA00856">
    <property type="reaction ID" value="UER00829"/>
</dbReference>
<dbReference type="Proteomes" id="UP000001006">
    <property type="component" value="Chromosome"/>
</dbReference>
<dbReference type="Proteomes" id="UP000002673">
    <property type="component" value="Chromosome"/>
</dbReference>
<dbReference type="GO" id="GO:0005737">
    <property type="term" value="C:cytoplasm"/>
    <property type="evidence" value="ECO:0007669"/>
    <property type="project" value="UniProtKB-SubCell"/>
</dbReference>
<dbReference type="GO" id="GO:0106009">
    <property type="term" value="F:(4S)-4-hydroxy-2-oxoglutarate aldolase activity"/>
    <property type="evidence" value="ECO:0007669"/>
    <property type="project" value="RHEA"/>
</dbReference>
<dbReference type="GO" id="GO:0008700">
    <property type="term" value="F:(R,S)-4-hydroxy-2-oxoglutarate aldolase activity"/>
    <property type="evidence" value="ECO:0007669"/>
    <property type="project" value="UniProtKB-EC"/>
</dbReference>
<dbReference type="GO" id="GO:0008675">
    <property type="term" value="F:2-dehydro-3-deoxy-phosphogluconate aldolase activity"/>
    <property type="evidence" value="ECO:0007669"/>
    <property type="project" value="UniProtKB-EC"/>
</dbReference>
<dbReference type="CDD" id="cd00452">
    <property type="entry name" value="KDPG_aldolase"/>
    <property type="match status" value="1"/>
</dbReference>
<dbReference type="FunFam" id="3.20.20.70:FF:000054">
    <property type="entry name" value="KHG/KDPG aldolase"/>
    <property type="match status" value="1"/>
</dbReference>
<dbReference type="Gene3D" id="3.20.20.70">
    <property type="entry name" value="Aldolase class I"/>
    <property type="match status" value="1"/>
</dbReference>
<dbReference type="InterPro" id="IPR000887">
    <property type="entry name" value="Aldlse_KDPG_KHG"/>
</dbReference>
<dbReference type="InterPro" id="IPR013785">
    <property type="entry name" value="Aldolase_TIM"/>
</dbReference>
<dbReference type="InterPro" id="IPR031337">
    <property type="entry name" value="KDPG/KHG_AS_1"/>
</dbReference>
<dbReference type="InterPro" id="IPR031338">
    <property type="entry name" value="KDPG/KHG_AS_2"/>
</dbReference>
<dbReference type="NCBIfam" id="TIGR01182">
    <property type="entry name" value="eda"/>
    <property type="match status" value="1"/>
</dbReference>
<dbReference type="NCBIfam" id="NF004325">
    <property type="entry name" value="PRK05718.1"/>
    <property type="match status" value="1"/>
</dbReference>
<dbReference type="PANTHER" id="PTHR30246:SF1">
    <property type="entry name" value="2-DEHYDRO-3-DEOXY-6-PHOSPHOGALACTONATE ALDOLASE-RELATED"/>
    <property type="match status" value="1"/>
</dbReference>
<dbReference type="PANTHER" id="PTHR30246">
    <property type="entry name" value="2-KETO-3-DEOXY-6-PHOSPHOGLUCONATE ALDOLASE"/>
    <property type="match status" value="1"/>
</dbReference>
<dbReference type="Pfam" id="PF01081">
    <property type="entry name" value="Aldolase"/>
    <property type="match status" value="1"/>
</dbReference>
<dbReference type="SUPFAM" id="SSF51569">
    <property type="entry name" value="Aldolase"/>
    <property type="match status" value="1"/>
</dbReference>
<dbReference type="PROSITE" id="PS00159">
    <property type="entry name" value="ALDOLASE_KDPG_KHG_1"/>
    <property type="match status" value="1"/>
</dbReference>
<dbReference type="PROSITE" id="PS00160">
    <property type="entry name" value="ALDOLASE_KDPG_KHG_2"/>
    <property type="match status" value="1"/>
</dbReference>
<name>ALKH_SHIFL</name>
<feature type="chain" id="PRO_0000201042" description="KHG/KDPG aldolase">
    <location>
        <begin position="1"/>
        <end position="213"/>
    </location>
</feature>
<feature type="active site" description="Proton acceptor" evidence="1">
    <location>
        <position position="45"/>
    </location>
</feature>
<feature type="active site" description="Schiff-base intermediate with substrate" evidence="1">
    <location>
        <position position="133"/>
    </location>
</feature>
<feature type="binding site" evidence="1">
    <location>
        <position position="49"/>
    </location>
    <ligand>
        <name>pyruvate</name>
        <dbReference type="ChEBI" id="CHEBI:15361"/>
    </ligand>
</feature>
<feature type="binding site" evidence="1">
    <location>
        <position position="73"/>
    </location>
    <ligand>
        <name>pyruvate</name>
        <dbReference type="ChEBI" id="CHEBI:15361"/>
    </ligand>
</feature>
<feature type="binding site" description="covalent" evidence="1">
    <location>
        <position position="133"/>
    </location>
    <ligand>
        <name>pyruvate</name>
        <dbReference type="ChEBI" id="CHEBI:15361"/>
    </ligand>
</feature>
<feature type="site" description="Plays a major role in determining the stereoselectivity" evidence="1">
    <location>
        <position position="161"/>
    </location>
</feature>
<comment type="function">
    <text evidence="1">Involved in the degradation of glucose via the Entner-Doudoroff pathway (By similarity). Catalyzes the reversible, stereospecific retro-aldol cleavage of 2-keto-3-deoxy-6-phosphogluconate (KDPG) to pyruvate and D-glyceraldehyde-3-phosphate (By similarity). In addition to its KDPG aldolase activity, catalyzes the reversible cleavage of 2-keto-4-hydroxyglutarate (KHG) to glyoxylate and pyruvate (By similarity). The enzyme is stereoselective for the S-enantiomer of KHG (By similarity). Cleavage of KHG could serve in tricarboxylic acid (TCA) cycle regulation or, when operating in the reverse direction, in the detoxification of glyoxylate (By similarity).</text>
</comment>
<comment type="catalytic activity">
    <reaction evidence="1">
        <text>2-dehydro-3-deoxy-6-phospho-D-gluconate = D-glyceraldehyde 3-phosphate + pyruvate</text>
        <dbReference type="Rhea" id="RHEA:17089"/>
        <dbReference type="ChEBI" id="CHEBI:15361"/>
        <dbReference type="ChEBI" id="CHEBI:57569"/>
        <dbReference type="ChEBI" id="CHEBI:59776"/>
        <dbReference type="EC" id="4.1.2.14"/>
    </reaction>
</comment>
<comment type="catalytic activity">
    <reaction evidence="1">
        <text>(4S)-4-hydroxy-2-oxoglutarate = glyoxylate + pyruvate</text>
        <dbReference type="Rhea" id="RHEA:35639"/>
        <dbReference type="ChEBI" id="CHEBI:15361"/>
        <dbReference type="ChEBI" id="CHEBI:36655"/>
        <dbReference type="ChEBI" id="CHEBI:71685"/>
        <dbReference type="EC" id="4.1.3.42"/>
    </reaction>
</comment>
<comment type="pathway">
    <text evidence="1">Carbohydrate acid metabolism; 2-dehydro-3-deoxy-D-gluconate degradation; D-glyceraldehyde 3-phosphate and pyruvate from 2-dehydro-3-deoxy-D-gluconate: step 2/2.</text>
</comment>
<comment type="pathway">
    <text evidence="1">Carbohydrate metabolism; glyoxylate and dicarboxylate metabolism.</text>
</comment>
<comment type="subunit">
    <text evidence="1">Homotrimer.</text>
</comment>
<comment type="subcellular location">
    <subcellularLocation>
        <location evidence="1">Cytoplasm</location>
    </subcellularLocation>
</comment>
<comment type="similarity">
    <text evidence="2">Belongs to the KHG/KDPG aldolase family.</text>
</comment>
<organism>
    <name type="scientific">Shigella flexneri</name>
    <dbReference type="NCBI Taxonomy" id="623"/>
    <lineage>
        <taxon>Bacteria</taxon>
        <taxon>Pseudomonadati</taxon>
        <taxon>Pseudomonadota</taxon>
        <taxon>Gammaproteobacteria</taxon>
        <taxon>Enterobacterales</taxon>
        <taxon>Enterobacteriaceae</taxon>
        <taxon>Shigella</taxon>
    </lineage>
</organism>
<accession>P0A958</accession>
<accession>P10177</accession>
<keyword id="KW-0119">Carbohydrate metabolism</keyword>
<keyword id="KW-0963">Cytoplasm</keyword>
<keyword id="KW-0456">Lyase</keyword>
<keyword id="KW-1185">Reference proteome</keyword>
<keyword id="KW-0704">Schiff base</keyword>
<reference key="1">
    <citation type="journal article" date="2002" name="Nucleic Acids Res.">
        <title>Genome sequence of Shigella flexneri 2a: insights into pathogenicity through comparison with genomes of Escherichia coli K12 and O157.</title>
        <authorList>
            <person name="Jin Q."/>
            <person name="Yuan Z."/>
            <person name="Xu J."/>
            <person name="Wang Y."/>
            <person name="Shen Y."/>
            <person name="Lu W."/>
            <person name="Wang J."/>
            <person name="Liu H."/>
            <person name="Yang J."/>
            <person name="Yang F."/>
            <person name="Zhang X."/>
            <person name="Zhang J."/>
            <person name="Yang G."/>
            <person name="Wu H."/>
            <person name="Qu D."/>
            <person name="Dong J."/>
            <person name="Sun L."/>
            <person name="Xue Y."/>
            <person name="Zhao A."/>
            <person name="Gao Y."/>
            <person name="Zhu J."/>
            <person name="Kan B."/>
            <person name="Ding K."/>
            <person name="Chen S."/>
            <person name="Cheng H."/>
            <person name="Yao Z."/>
            <person name="He B."/>
            <person name="Chen R."/>
            <person name="Ma D."/>
            <person name="Qiang B."/>
            <person name="Wen Y."/>
            <person name="Hou Y."/>
            <person name="Yu J."/>
        </authorList>
    </citation>
    <scope>NUCLEOTIDE SEQUENCE [LARGE SCALE GENOMIC DNA]</scope>
    <source>
        <strain>301 / Serotype 2a</strain>
    </source>
</reference>
<reference key="2">
    <citation type="journal article" date="2003" name="Infect. Immun.">
        <title>Complete genome sequence and comparative genomics of Shigella flexneri serotype 2a strain 2457T.</title>
        <authorList>
            <person name="Wei J."/>
            <person name="Goldberg M.B."/>
            <person name="Burland V."/>
            <person name="Venkatesan M.M."/>
            <person name="Deng W."/>
            <person name="Fournier G."/>
            <person name="Mayhew G.F."/>
            <person name="Plunkett G. III"/>
            <person name="Rose D.J."/>
            <person name="Darling A."/>
            <person name="Mau B."/>
            <person name="Perna N.T."/>
            <person name="Payne S.M."/>
            <person name="Runyen-Janecky L.J."/>
            <person name="Zhou S."/>
            <person name="Schwartz D.C."/>
            <person name="Blattner F.R."/>
        </authorList>
    </citation>
    <scope>NUCLEOTIDE SEQUENCE [LARGE SCALE GENOMIC DNA]</scope>
    <source>
        <strain>ATCC 700930 / 2457T / Serotype 2a</strain>
    </source>
</reference>
<gene>
    <name evidence="3" type="ordered locus">SF1860</name>
    <name evidence="4" type="ordered locus">S1926</name>
</gene>
<proteinExistence type="inferred from homology"/>
<sequence>MKNWKTSAESILTTGPVVPVIVVKKLEHAVPMAKALVAGGVRVLEVTLRTECAVDAIRAIAKEVPEAIVGAGTVLNPQQLAEVTEAGAQFAISPGLTEPLLKAATEGTIPLIPGISTVSELMLGMDYGLKEFKFFPAEANGGVKALQAIAGPFSQVRFCPTGGISPANYRDYLALKSVLCIGGSWLVPADALEAGDYDRITKLAREAVEGAKL</sequence>
<protein>
    <recommendedName>
        <fullName evidence="1">KHG/KDPG aldolase</fullName>
    </recommendedName>
    <alternativeName>
        <fullName evidence="1">(4S)-4-hydroxy-2-oxoglutarate aldolase</fullName>
        <ecNumber evidence="1">4.1.3.42</ecNumber>
    </alternativeName>
    <alternativeName>
        <fullName evidence="1">2-dehydro-3-deoxy-phosphogluconate aldolase</fullName>
        <ecNumber evidence="1">4.1.2.14</ecNumber>
    </alternativeName>
    <alternativeName>
        <fullName evidence="1">2-keto-3-deoxy-6-phosphogluconate aldolase</fullName>
        <shortName evidence="1">KDPG aldolase</shortName>
    </alternativeName>
    <alternativeName>
        <fullName evidence="1">2-keto-4-hydroxyglutarate aldolase</fullName>
        <shortName evidence="1">KHG aldolase</shortName>
        <shortName evidence="1">Ketohydroxyglutarate aldolase</shortName>
    </alternativeName>
</protein>